<sequence>MFMVNLLLLIIPALIAMAFLTLTERKILGYMQFRKGPNIVGPYGMLQPIADAMKLFMKEPLLPTTSASTLYMTAPTLALSIALLMWSPLPMPHPLINFNLGLLFMLATSSLAVYSILWSGWASNSNYALIGALRAVAQTISYEVTLAIILLSTLLMSGSFNLQSLITTQEHSWLLLPSWPMAMMWFTSTLAETNRAPFDLTEGESELVSGFNIEYAAGSFALFFMAEYMNIIMMNALTTTIFLAMPYNMASSELYTMNFMTKTLLLTTLFLWIRTAYPRFRYDQLMHLLWKKFLPLTLALCMWYISMPALTSGIPPQT</sequence>
<dbReference type="EC" id="7.1.1.2" evidence="1"/>
<dbReference type="EMBL" id="AB010971">
    <property type="protein sequence ID" value="BAA32096.1"/>
    <property type="molecule type" value="Genomic_DNA"/>
</dbReference>
<dbReference type="SMR" id="O78693"/>
<dbReference type="GO" id="GO:0005743">
    <property type="term" value="C:mitochondrial inner membrane"/>
    <property type="evidence" value="ECO:0000250"/>
    <property type="project" value="UniProtKB"/>
</dbReference>
<dbReference type="GO" id="GO:0008137">
    <property type="term" value="F:NADH dehydrogenase (ubiquinone) activity"/>
    <property type="evidence" value="ECO:0000250"/>
    <property type="project" value="UniProtKB"/>
</dbReference>
<dbReference type="GO" id="GO:0006120">
    <property type="term" value="P:mitochondrial electron transport, NADH to ubiquinone"/>
    <property type="evidence" value="ECO:0000250"/>
    <property type="project" value="UniProtKB"/>
</dbReference>
<dbReference type="GO" id="GO:0032981">
    <property type="term" value="P:mitochondrial respiratory chain complex I assembly"/>
    <property type="evidence" value="ECO:0000250"/>
    <property type="project" value="UniProtKB"/>
</dbReference>
<dbReference type="HAMAP" id="MF_01350">
    <property type="entry name" value="NDH1_NuoH"/>
    <property type="match status" value="1"/>
</dbReference>
<dbReference type="InterPro" id="IPR001694">
    <property type="entry name" value="NADH_UbQ_OxRdtase_su1/FPO"/>
</dbReference>
<dbReference type="InterPro" id="IPR018086">
    <property type="entry name" value="NADH_UbQ_OxRdtase_su1_CS"/>
</dbReference>
<dbReference type="PANTHER" id="PTHR11432">
    <property type="entry name" value="NADH DEHYDROGENASE SUBUNIT 1"/>
    <property type="match status" value="1"/>
</dbReference>
<dbReference type="PANTHER" id="PTHR11432:SF3">
    <property type="entry name" value="NADH-UBIQUINONE OXIDOREDUCTASE CHAIN 1"/>
    <property type="match status" value="1"/>
</dbReference>
<dbReference type="Pfam" id="PF00146">
    <property type="entry name" value="NADHdh"/>
    <property type="match status" value="1"/>
</dbReference>
<dbReference type="PROSITE" id="PS00667">
    <property type="entry name" value="COMPLEX1_ND1_1"/>
    <property type="match status" value="1"/>
</dbReference>
<dbReference type="PROSITE" id="PS00668">
    <property type="entry name" value="COMPLEX1_ND1_2"/>
    <property type="match status" value="1"/>
</dbReference>
<protein>
    <recommendedName>
        <fullName>NADH-ubiquinone oxidoreductase chain 1</fullName>
        <ecNumber evidence="1">7.1.1.2</ecNumber>
    </recommendedName>
    <alternativeName>
        <fullName>NADH dehydrogenase subunit 1</fullName>
    </alternativeName>
</protein>
<geneLocation type="mitochondrion"/>
<comment type="function">
    <text evidence="1">Core subunit of the mitochondrial membrane respiratory chain NADH dehydrogenase (Complex I) which catalyzes electron transfer from NADH through the respiratory chain, using ubiquinone as an electron acceptor. Essential for the catalytic activity and assembly of complex I.</text>
</comment>
<comment type="catalytic activity">
    <reaction evidence="1">
        <text>a ubiquinone + NADH + 5 H(+)(in) = a ubiquinol + NAD(+) + 4 H(+)(out)</text>
        <dbReference type="Rhea" id="RHEA:29091"/>
        <dbReference type="Rhea" id="RHEA-COMP:9565"/>
        <dbReference type="Rhea" id="RHEA-COMP:9566"/>
        <dbReference type="ChEBI" id="CHEBI:15378"/>
        <dbReference type="ChEBI" id="CHEBI:16389"/>
        <dbReference type="ChEBI" id="CHEBI:17976"/>
        <dbReference type="ChEBI" id="CHEBI:57540"/>
        <dbReference type="ChEBI" id="CHEBI:57945"/>
        <dbReference type="EC" id="7.1.1.2"/>
    </reaction>
</comment>
<comment type="subunit">
    <text evidence="2">Core subunit of respiratory chain NADH dehydrogenase (Complex I) which is composed of 45 different subunits.</text>
</comment>
<comment type="subcellular location">
    <subcellularLocation>
        <location evidence="2">Mitochondrion inner membrane</location>
        <topology evidence="3">Multi-pass membrane protein</topology>
    </subcellularLocation>
</comment>
<comment type="similarity">
    <text evidence="4">Belongs to the complex I subunit 1 family.</text>
</comment>
<feature type="chain" id="PRO_0000117351" description="NADH-ubiquinone oxidoreductase chain 1">
    <location>
        <begin position="1"/>
        <end position="318"/>
    </location>
</feature>
<feature type="transmembrane region" description="Helical" evidence="3">
    <location>
        <begin position="2"/>
        <end position="22"/>
    </location>
</feature>
<feature type="transmembrane region" description="Helical" evidence="3">
    <location>
        <begin position="76"/>
        <end position="96"/>
    </location>
</feature>
<feature type="transmembrane region" description="Helical" evidence="3">
    <location>
        <begin position="98"/>
        <end position="118"/>
    </location>
</feature>
<feature type="transmembrane region" description="Helical" evidence="3">
    <location>
        <begin position="140"/>
        <end position="160"/>
    </location>
</feature>
<feature type="transmembrane region" description="Helical" evidence="3">
    <location>
        <begin position="171"/>
        <end position="191"/>
    </location>
</feature>
<feature type="transmembrane region" description="Helical" evidence="3">
    <location>
        <begin position="217"/>
        <end position="237"/>
    </location>
</feature>
<feature type="transmembrane region" description="Helical" evidence="3">
    <location>
        <begin position="253"/>
        <end position="273"/>
    </location>
</feature>
<feature type="transmembrane region" description="Helical" evidence="3">
    <location>
        <begin position="294"/>
        <end position="314"/>
    </location>
</feature>
<gene>
    <name type="primary">MT-ND1</name>
    <name type="synonym">MTND1</name>
    <name type="synonym">NADH1</name>
    <name type="synonym">ND1</name>
</gene>
<reference key="1">
    <citation type="journal article" date="1998" name="J. Mol. Evol.">
        <title>Conflict among individual mitochondrial proteins in resolving the phylogeny of eutherian orders.</title>
        <authorList>
            <person name="Cao Y."/>
            <person name="Janke A."/>
            <person name="Waddell P.J."/>
            <person name="Westerman M."/>
            <person name="Takenaka O."/>
            <person name="Murata S."/>
            <person name="Okada N."/>
            <person name="Paeaebo S."/>
            <person name="Hasegawa M."/>
        </authorList>
    </citation>
    <scope>NUCLEOTIDE SEQUENCE [GENOMIC DNA]</scope>
    <source>
        <tissue>Muscle</tissue>
    </source>
</reference>
<keyword id="KW-0249">Electron transport</keyword>
<keyword id="KW-0472">Membrane</keyword>
<keyword id="KW-0496">Mitochondrion</keyword>
<keyword id="KW-0999">Mitochondrion inner membrane</keyword>
<keyword id="KW-0520">NAD</keyword>
<keyword id="KW-0679">Respiratory chain</keyword>
<keyword id="KW-1278">Translocase</keyword>
<keyword id="KW-0812">Transmembrane</keyword>
<keyword id="KW-1133">Transmembrane helix</keyword>
<keyword id="KW-0813">Transport</keyword>
<keyword id="KW-0830">Ubiquinone</keyword>
<evidence type="ECO:0000250" key="1">
    <source>
        <dbReference type="UniProtKB" id="P03886"/>
    </source>
</evidence>
<evidence type="ECO:0000250" key="2">
    <source>
        <dbReference type="UniProtKB" id="P03887"/>
    </source>
</evidence>
<evidence type="ECO:0000255" key="3"/>
<evidence type="ECO:0000305" key="4"/>
<organism>
    <name type="scientific">Ateles paniscus</name>
    <name type="common">Black spider monkey</name>
    <name type="synonym">Red-faced black spider monkey</name>
    <dbReference type="NCBI Taxonomy" id="9510"/>
    <lineage>
        <taxon>Eukaryota</taxon>
        <taxon>Metazoa</taxon>
        <taxon>Chordata</taxon>
        <taxon>Craniata</taxon>
        <taxon>Vertebrata</taxon>
        <taxon>Euteleostomi</taxon>
        <taxon>Mammalia</taxon>
        <taxon>Eutheria</taxon>
        <taxon>Euarchontoglires</taxon>
        <taxon>Primates</taxon>
        <taxon>Haplorrhini</taxon>
        <taxon>Platyrrhini</taxon>
        <taxon>Atelidae</taxon>
        <taxon>Atelinae</taxon>
        <taxon>Ateles</taxon>
    </lineage>
</organism>
<name>NU1M_ATEPA</name>
<accession>O78693</accession>
<proteinExistence type="inferred from homology"/>